<evidence type="ECO:0000250" key="1"/>
<evidence type="ECO:0000255" key="2"/>
<evidence type="ECO:0000255" key="3">
    <source>
        <dbReference type="PROSITE-ProRule" id="PRU01058"/>
    </source>
</evidence>
<evidence type="ECO:0000256" key="4">
    <source>
        <dbReference type="SAM" id="MobiDB-lite"/>
    </source>
</evidence>
<name>GEP3_CANAL</name>
<proteinExistence type="inferred from homology"/>
<comment type="function">
    <text evidence="1">May be involved in the mitochondrial lipid metabolism.</text>
</comment>
<comment type="subcellular location">
    <subcellularLocation>
        <location evidence="1">Mitochondrion</location>
    </subcellularLocation>
</comment>
<comment type="similarity">
    <text evidence="3">Belongs to the TRAFAC class YlqF/YawG GTPase family. GEP3 subfamily.</text>
</comment>
<reference key="1">
    <citation type="journal article" date="2004" name="Proc. Natl. Acad. Sci. U.S.A.">
        <title>The diploid genome sequence of Candida albicans.</title>
        <authorList>
            <person name="Jones T."/>
            <person name="Federspiel N.A."/>
            <person name="Chibana H."/>
            <person name="Dungan J."/>
            <person name="Kalman S."/>
            <person name="Magee B.B."/>
            <person name="Newport G."/>
            <person name="Thorstenson Y.R."/>
            <person name="Agabian N."/>
            <person name="Magee P.T."/>
            <person name="Davis R.W."/>
            <person name="Scherer S."/>
        </authorList>
    </citation>
    <scope>NUCLEOTIDE SEQUENCE [LARGE SCALE GENOMIC DNA]</scope>
    <source>
        <strain>SC5314 / ATCC MYA-2876</strain>
    </source>
</reference>
<reference key="2">
    <citation type="journal article" date="2007" name="Genome Biol.">
        <title>Assembly of the Candida albicans genome into sixteen supercontigs aligned on the eight chromosomes.</title>
        <authorList>
            <person name="van het Hoog M."/>
            <person name="Rast T.J."/>
            <person name="Martchenko M."/>
            <person name="Grindle S."/>
            <person name="Dignard D."/>
            <person name="Hogues H."/>
            <person name="Cuomo C."/>
            <person name="Berriman M."/>
            <person name="Scherer S."/>
            <person name="Magee B.B."/>
            <person name="Whiteway M."/>
            <person name="Chibana H."/>
            <person name="Nantel A."/>
            <person name="Magee P.T."/>
        </authorList>
    </citation>
    <scope>GENOME REANNOTATION</scope>
    <source>
        <strain>SC5314 / ATCC MYA-2876</strain>
    </source>
</reference>
<reference key="3">
    <citation type="journal article" date="2013" name="Genome Biol.">
        <title>Assembly of a phased diploid Candida albicans genome facilitates allele-specific measurements and provides a simple model for repeat and indel structure.</title>
        <authorList>
            <person name="Muzzey D."/>
            <person name="Schwartz K."/>
            <person name="Weissman J.S."/>
            <person name="Sherlock G."/>
        </authorList>
    </citation>
    <scope>NUCLEOTIDE SEQUENCE [LARGE SCALE GENOMIC DNA]</scope>
    <scope>GENOME REANNOTATION</scope>
    <source>
        <strain>SC5314 / ATCC MYA-2876</strain>
    </source>
</reference>
<accession>Q5ADV5</accession>
<accession>A0A1D8PKT5</accession>
<feature type="transit peptide" description="Mitochondrion" evidence="2">
    <location>
        <begin position="1"/>
        <end position="19"/>
    </location>
</feature>
<feature type="chain" id="PRO_0000409628" description="Genetic interactor of prohibitins 3, mitochondrial">
    <location>
        <begin position="20"/>
        <end position="629"/>
    </location>
</feature>
<feature type="domain" description="CP-type G" evidence="3">
    <location>
        <begin position="171"/>
        <end position="374"/>
    </location>
</feature>
<feature type="region of interest" description="Disordered" evidence="4">
    <location>
        <begin position="52"/>
        <end position="71"/>
    </location>
</feature>
<organism>
    <name type="scientific">Candida albicans (strain SC5314 / ATCC MYA-2876)</name>
    <name type="common">Yeast</name>
    <dbReference type="NCBI Taxonomy" id="237561"/>
    <lineage>
        <taxon>Eukaryota</taxon>
        <taxon>Fungi</taxon>
        <taxon>Dikarya</taxon>
        <taxon>Ascomycota</taxon>
        <taxon>Saccharomycotina</taxon>
        <taxon>Pichiomycetes</taxon>
        <taxon>Debaryomycetaceae</taxon>
        <taxon>Candida/Lodderomyces clade</taxon>
        <taxon>Candida</taxon>
    </lineage>
</organism>
<dbReference type="EMBL" id="CP017625">
    <property type="protein sequence ID" value="AOW28754.1"/>
    <property type="molecule type" value="Genomic_DNA"/>
</dbReference>
<dbReference type="RefSeq" id="XP_719834.1">
    <property type="nucleotide sequence ID" value="XM_714741.1"/>
</dbReference>
<dbReference type="SMR" id="Q5ADV5"/>
<dbReference type="FunCoup" id="Q5ADV5">
    <property type="interactions" value="87"/>
</dbReference>
<dbReference type="STRING" id="237561.Q5ADV5"/>
<dbReference type="EnsemblFungi" id="C3_07550C_A-T">
    <property type="protein sequence ID" value="C3_07550C_A-T-p1"/>
    <property type="gene ID" value="C3_07550C_A"/>
</dbReference>
<dbReference type="GeneID" id="3638525"/>
<dbReference type="KEGG" id="cal:CAALFM_C307550CA"/>
<dbReference type="CGD" id="CAL0000193890">
    <property type="gene designation" value="orf19.14028"/>
</dbReference>
<dbReference type="VEuPathDB" id="FungiDB:C3_07550C_A"/>
<dbReference type="eggNOG" id="ENOG502S067">
    <property type="taxonomic scope" value="Eukaryota"/>
</dbReference>
<dbReference type="HOGENOM" id="CLU_025792_0_0_1"/>
<dbReference type="InParanoid" id="Q5ADV5"/>
<dbReference type="OMA" id="IIPPFYG"/>
<dbReference type="OrthoDB" id="1696305at2759"/>
<dbReference type="PRO" id="PR:Q5ADV5"/>
<dbReference type="Proteomes" id="UP000000559">
    <property type="component" value="Chromosome 3"/>
</dbReference>
<dbReference type="GO" id="GO:0005739">
    <property type="term" value="C:mitochondrion"/>
    <property type="evidence" value="ECO:0000318"/>
    <property type="project" value="GO_Central"/>
</dbReference>
<dbReference type="GO" id="GO:0005525">
    <property type="term" value="F:GTP binding"/>
    <property type="evidence" value="ECO:0007669"/>
    <property type="project" value="InterPro"/>
</dbReference>
<dbReference type="Gene3D" id="3.40.50.300">
    <property type="entry name" value="P-loop containing nucleotide triphosphate hydrolases"/>
    <property type="match status" value="1"/>
</dbReference>
<dbReference type="InterPro" id="IPR030378">
    <property type="entry name" value="G_CP_dom"/>
</dbReference>
<dbReference type="InterPro" id="IPR050896">
    <property type="entry name" value="Mito_lipid_metab_GTPase"/>
</dbReference>
<dbReference type="InterPro" id="IPR027417">
    <property type="entry name" value="P-loop_NTPase"/>
</dbReference>
<dbReference type="PANTHER" id="PTHR46434">
    <property type="entry name" value="GENETIC INTERACTOR OF PROHIBITINS 3, MITOCHONDRIAL"/>
    <property type="match status" value="1"/>
</dbReference>
<dbReference type="PANTHER" id="PTHR46434:SF1">
    <property type="entry name" value="GENETIC INTERACTOR OF PROHIBITINS 3, MITOCHONDRIAL"/>
    <property type="match status" value="1"/>
</dbReference>
<dbReference type="SUPFAM" id="SSF52540">
    <property type="entry name" value="P-loop containing nucleoside triphosphate hydrolases"/>
    <property type="match status" value="1"/>
</dbReference>
<dbReference type="PROSITE" id="PS51721">
    <property type="entry name" value="G_CP"/>
    <property type="match status" value="1"/>
</dbReference>
<gene>
    <name type="primary">GEP3</name>
    <name type="synonym">FMP48</name>
    <name type="ordered locus">CAALFM_C307550CA</name>
    <name type="ORF">CaO19.14028</name>
    <name type="ORF">CaO19.6736</name>
</gene>
<keyword id="KW-0496">Mitochondrion</keyword>
<keyword id="KW-1185">Reference proteome</keyword>
<keyword id="KW-0809">Transit peptide</keyword>
<sequence length="629" mass="72434">MFSRSILLRSVRKSLGRYYSSQAHPQTYIYNLLSDTKCRSCGIQLQDKFPDKPGYYRLPGQNDSNTDKKAKTSELNKKYEKILQNLDISDRNLLINNFSAPKQDDEKVASVPSLQQITPVEADTRDTTKDQQTHSGHSLSCKRCNDVIYNSKTRSIYDPNRDNLNKSEFPIPKLQQVLSTIPVDAPLVYVFSANDFPMGINKDIFQYRPPQQIYFVMTKSDILIPKTNVAFYNNFKKFLQNYMFKKFNVPRENVFIASGKDRWKMTDLYHFIPNYSYIIGDTNCGKSTLVKSLLINHHVKHWKYEALQQRPDEKQSSSASLKNKDFKKLDRLIDSFSSKNGPGTSHIPGFTRDVVPVDIDGIKELFDVPGFTTNENLQDIFDKLNHKQIARITKGANTSKYGSLKSKFDTVKNGQVLSLNGVGYLQFPGQDSMYQIRNVTKFALHKFKNLEKVDSILQRNEIPKSMSSHFIVNRQQQQQQRNELRGYYKRYIIPPFYGTIDLVIKDIGYINIKPTGKKLTNELMVLYLHPSLEAIIRQPILNYIDSPTPKKSPDGTNRKTITSDISKTPFYSRLIPSTVLSDPSSLVLSPPSSDYNQLNQYLQIDESSESAYNDLLELDETNKYDYWIE</sequence>
<protein>
    <recommendedName>
        <fullName>Genetic interactor of prohibitins 3, mitochondrial</fullName>
    </recommendedName>
    <alternativeName>
        <fullName>Found in mitochondrial proteome protein 38</fullName>
    </alternativeName>
</protein>